<name>SELO_ALIF1</name>
<evidence type="ECO:0000255" key="1">
    <source>
        <dbReference type="HAMAP-Rule" id="MF_00692"/>
    </source>
</evidence>
<keyword id="KW-0067">ATP-binding</keyword>
<keyword id="KW-0460">Magnesium</keyword>
<keyword id="KW-0464">Manganese</keyword>
<keyword id="KW-0479">Metal-binding</keyword>
<keyword id="KW-0547">Nucleotide-binding</keyword>
<keyword id="KW-0548">Nucleotidyltransferase</keyword>
<keyword id="KW-1185">Reference proteome</keyword>
<keyword id="KW-0808">Transferase</keyword>
<accession>Q5E3Y2</accession>
<proteinExistence type="inferred from homology"/>
<comment type="function">
    <text evidence="1">Nucleotidyltransferase involved in the post-translational modification of proteins. It can catalyze the addition of adenosine monophosphate (AMP) or uridine monophosphate (UMP) to a protein, resulting in modifications known as AMPylation and UMPylation.</text>
</comment>
<comment type="catalytic activity">
    <reaction evidence="1">
        <text>L-seryl-[protein] + ATP = 3-O-(5'-adenylyl)-L-seryl-[protein] + diphosphate</text>
        <dbReference type="Rhea" id="RHEA:58120"/>
        <dbReference type="Rhea" id="RHEA-COMP:9863"/>
        <dbReference type="Rhea" id="RHEA-COMP:15073"/>
        <dbReference type="ChEBI" id="CHEBI:29999"/>
        <dbReference type="ChEBI" id="CHEBI:30616"/>
        <dbReference type="ChEBI" id="CHEBI:33019"/>
        <dbReference type="ChEBI" id="CHEBI:142516"/>
        <dbReference type="EC" id="2.7.7.108"/>
    </reaction>
</comment>
<comment type="catalytic activity">
    <reaction evidence="1">
        <text>L-threonyl-[protein] + ATP = 3-O-(5'-adenylyl)-L-threonyl-[protein] + diphosphate</text>
        <dbReference type="Rhea" id="RHEA:54292"/>
        <dbReference type="Rhea" id="RHEA-COMP:11060"/>
        <dbReference type="Rhea" id="RHEA-COMP:13847"/>
        <dbReference type="ChEBI" id="CHEBI:30013"/>
        <dbReference type="ChEBI" id="CHEBI:30616"/>
        <dbReference type="ChEBI" id="CHEBI:33019"/>
        <dbReference type="ChEBI" id="CHEBI:138113"/>
        <dbReference type="EC" id="2.7.7.108"/>
    </reaction>
</comment>
<comment type="catalytic activity">
    <reaction evidence="1">
        <text>L-tyrosyl-[protein] + ATP = O-(5'-adenylyl)-L-tyrosyl-[protein] + diphosphate</text>
        <dbReference type="Rhea" id="RHEA:54288"/>
        <dbReference type="Rhea" id="RHEA-COMP:10136"/>
        <dbReference type="Rhea" id="RHEA-COMP:13846"/>
        <dbReference type="ChEBI" id="CHEBI:30616"/>
        <dbReference type="ChEBI" id="CHEBI:33019"/>
        <dbReference type="ChEBI" id="CHEBI:46858"/>
        <dbReference type="ChEBI" id="CHEBI:83624"/>
        <dbReference type="EC" id="2.7.7.108"/>
    </reaction>
</comment>
<comment type="catalytic activity">
    <reaction evidence="1">
        <text>L-histidyl-[protein] + UTP = N(tele)-(5'-uridylyl)-L-histidyl-[protein] + diphosphate</text>
        <dbReference type="Rhea" id="RHEA:83891"/>
        <dbReference type="Rhea" id="RHEA-COMP:9745"/>
        <dbReference type="Rhea" id="RHEA-COMP:20239"/>
        <dbReference type="ChEBI" id="CHEBI:29979"/>
        <dbReference type="ChEBI" id="CHEBI:33019"/>
        <dbReference type="ChEBI" id="CHEBI:46398"/>
        <dbReference type="ChEBI" id="CHEBI:233474"/>
    </reaction>
</comment>
<comment type="catalytic activity">
    <reaction evidence="1">
        <text>L-seryl-[protein] + UTP = O-(5'-uridylyl)-L-seryl-[protein] + diphosphate</text>
        <dbReference type="Rhea" id="RHEA:64604"/>
        <dbReference type="Rhea" id="RHEA-COMP:9863"/>
        <dbReference type="Rhea" id="RHEA-COMP:16635"/>
        <dbReference type="ChEBI" id="CHEBI:29999"/>
        <dbReference type="ChEBI" id="CHEBI:33019"/>
        <dbReference type="ChEBI" id="CHEBI:46398"/>
        <dbReference type="ChEBI" id="CHEBI:156051"/>
    </reaction>
</comment>
<comment type="catalytic activity">
    <reaction evidence="1">
        <text>L-tyrosyl-[protein] + UTP = O-(5'-uridylyl)-L-tyrosyl-[protein] + diphosphate</text>
        <dbReference type="Rhea" id="RHEA:83887"/>
        <dbReference type="Rhea" id="RHEA-COMP:10136"/>
        <dbReference type="Rhea" id="RHEA-COMP:20238"/>
        <dbReference type="ChEBI" id="CHEBI:33019"/>
        <dbReference type="ChEBI" id="CHEBI:46398"/>
        <dbReference type="ChEBI" id="CHEBI:46858"/>
        <dbReference type="ChEBI" id="CHEBI:90602"/>
    </reaction>
</comment>
<comment type="cofactor">
    <cofactor evidence="1">
        <name>Mg(2+)</name>
        <dbReference type="ChEBI" id="CHEBI:18420"/>
    </cofactor>
    <cofactor evidence="1">
        <name>Mn(2+)</name>
        <dbReference type="ChEBI" id="CHEBI:29035"/>
    </cofactor>
</comment>
<comment type="similarity">
    <text evidence="1">Belongs to the SELO family.</text>
</comment>
<organism>
    <name type="scientific">Aliivibrio fischeri (strain ATCC 700601 / ES114)</name>
    <name type="common">Vibrio fischeri</name>
    <dbReference type="NCBI Taxonomy" id="312309"/>
    <lineage>
        <taxon>Bacteria</taxon>
        <taxon>Pseudomonadati</taxon>
        <taxon>Pseudomonadota</taxon>
        <taxon>Gammaproteobacteria</taxon>
        <taxon>Vibrionales</taxon>
        <taxon>Vibrionaceae</taxon>
        <taxon>Aliivibrio</taxon>
    </lineage>
</organism>
<sequence>MSFWNSLSITTRYSRLPRCFFTYVQPTPLDNSRWLIWNSELAKQFDLPENVHNHSELLDAFSGETVPSVFSPLAMKYAGHQFGCYNPDLGDGRGLLLAEIKDKKGNSFDLHLKGAGLTPYSRSGDGRAVLRSTIREYLCSEAMAGLGIPTTRALGMMTSDTPVFREGYETGALLIRMAETHIRFGHFEHLFYSNLLEELKLLSDKVIEWHFPCCLGEDKPYLAMFNNIVDRTAYMIAQWQAVGFAHGVMNTDNMSIIGQTFDYGPFGFLDDYEPGYICNHSDYQGRYAFNQQPRIGLWNLSALAHSLSPLIDKSDLEKALEQYEIKLHDYFSQLMRKKLGLLSKQEGDTRLFESMFELLSQNAVDYTRFMRALSYLDSQDKQTVVDLFVDREAATLWIDLYLTRCKLEVDSFDMRCSKMRKVNPKYVLRNYLAQQAIVKANEGDFSDVKILSTLLASPFDEHPDFERYAELPPEWGKRMEISCSS</sequence>
<dbReference type="EC" id="2.7.7.-" evidence="1"/>
<dbReference type="EC" id="2.7.7.108" evidence="1"/>
<dbReference type="EMBL" id="CP000020">
    <property type="protein sequence ID" value="AAW86264.1"/>
    <property type="molecule type" value="Genomic_DNA"/>
</dbReference>
<dbReference type="RefSeq" id="WP_011262303.1">
    <property type="nucleotide sequence ID" value="NC_006840.2"/>
</dbReference>
<dbReference type="RefSeq" id="YP_205152.1">
    <property type="nucleotide sequence ID" value="NC_006840.2"/>
</dbReference>
<dbReference type="SMR" id="Q5E3Y2"/>
<dbReference type="EnsemblBacteria" id="AAW86264">
    <property type="protein sequence ID" value="AAW86264"/>
    <property type="gene ID" value="VF_1769"/>
</dbReference>
<dbReference type="GeneID" id="54164468"/>
<dbReference type="KEGG" id="vfi:VF_1769"/>
<dbReference type="PATRIC" id="fig|312309.11.peg.1795"/>
<dbReference type="eggNOG" id="COG0397">
    <property type="taxonomic scope" value="Bacteria"/>
</dbReference>
<dbReference type="HOGENOM" id="CLU_010245_4_0_6"/>
<dbReference type="OrthoDB" id="9776281at2"/>
<dbReference type="Proteomes" id="UP000000537">
    <property type="component" value="Chromosome I"/>
</dbReference>
<dbReference type="GO" id="GO:0070733">
    <property type="term" value="F:AMPylase activity"/>
    <property type="evidence" value="ECO:0007669"/>
    <property type="project" value="TreeGrafter"/>
</dbReference>
<dbReference type="GO" id="GO:0005524">
    <property type="term" value="F:ATP binding"/>
    <property type="evidence" value="ECO:0007669"/>
    <property type="project" value="UniProtKB-UniRule"/>
</dbReference>
<dbReference type="GO" id="GO:0000287">
    <property type="term" value="F:magnesium ion binding"/>
    <property type="evidence" value="ECO:0007669"/>
    <property type="project" value="UniProtKB-UniRule"/>
</dbReference>
<dbReference type="HAMAP" id="MF_00692">
    <property type="entry name" value="YdiU_SelO"/>
    <property type="match status" value="1"/>
</dbReference>
<dbReference type="InterPro" id="IPR003846">
    <property type="entry name" value="SelO"/>
</dbReference>
<dbReference type="NCBIfam" id="NF000658">
    <property type="entry name" value="PRK00029.1"/>
    <property type="match status" value="1"/>
</dbReference>
<dbReference type="PANTHER" id="PTHR32057">
    <property type="entry name" value="PROTEIN ADENYLYLTRANSFERASE SELO, MITOCHONDRIAL"/>
    <property type="match status" value="1"/>
</dbReference>
<dbReference type="PANTHER" id="PTHR32057:SF14">
    <property type="entry name" value="PROTEIN ADENYLYLTRANSFERASE SELO, MITOCHONDRIAL"/>
    <property type="match status" value="1"/>
</dbReference>
<dbReference type="Pfam" id="PF02696">
    <property type="entry name" value="SelO"/>
    <property type="match status" value="1"/>
</dbReference>
<protein>
    <recommendedName>
        <fullName evidence="1">Protein nucleotidyltransferase YdiU</fullName>
        <ecNumber evidence="1">2.7.7.-</ecNumber>
    </recommendedName>
    <alternativeName>
        <fullName evidence="1">Protein adenylyltransferase YdiU</fullName>
        <ecNumber evidence="1">2.7.7.108</ecNumber>
    </alternativeName>
    <alternativeName>
        <fullName evidence="1">Protein uridylyltransferase YdiU</fullName>
        <ecNumber evidence="1">2.7.7.-</ecNumber>
    </alternativeName>
</protein>
<gene>
    <name evidence="1" type="primary">ydiU</name>
    <name evidence="1" type="synonym">selO</name>
    <name type="ordered locus">VF_1769</name>
</gene>
<feature type="chain" id="PRO_0000271878" description="Protein nucleotidyltransferase YdiU">
    <location>
        <begin position="1"/>
        <end position="485"/>
    </location>
</feature>
<feature type="active site" description="Proton acceptor" evidence="1">
    <location>
        <position position="252"/>
    </location>
</feature>
<feature type="binding site" evidence="1">
    <location>
        <position position="90"/>
    </location>
    <ligand>
        <name>ATP</name>
        <dbReference type="ChEBI" id="CHEBI:30616"/>
    </ligand>
</feature>
<feature type="binding site" evidence="1">
    <location>
        <position position="92"/>
    </location>
    <ligand>
        <name>ATP</name>
        <dbReference type="ChEBI" id="CHEBI:30616"/>
    </ligand>
</feature>
<feature type="binding site" evidence="1">
    <location>
        <position position="93"/>
    </location>
    <ligand>
        <name>ATP</name>
        <dbReference type="ChEBI" id="CHEBI:30616"/>
    </ligand>
</feature>
<feature type="binding site" evidence="1">
    <location>
        <position position="113"/>
    </location>
    <ligand>
        <name>ATP</name>
        <dbReference type="ChEBI" id="CHEBI:30616"/>
    </ligand>
</feature>
<feature type="binding site" evidence="1">
    <location>
        <position position="125"/>
    </location>
    <ligand>
        <name>ATP</name>
        <dbReference type="ChEBI" id="CHEBI:30616"/>
    </ligand>
</feature>
<feature type="binding site" evidence="1">
    <location>
        <position position="126"/>
    </location>
    <ligand>
        <name>ATP</name>
        <dbReference type="ChEBI" id="CHEBI:30616"/>
    </ligand>
</feature>
<feature type="binding site" evidence="1">
    <location>
        <position position="176"/>
    </location>
    <ligand>
        <name>ATP</name>
        <dbReference type="ChEBI" id="CHEBI:30616"/>
    </ligand>
</feature>
<feature type="binding site" evidence="1">
    <location>
        <position position="183"/>
    </location>
    <ligand>
        <name>ATP</name>
        <dbReference type="ChEBI" id="CHEBI:30616"/>
    </ligand>
</feature>
<feature type="binding site" evidence="1">
    <location>
        <position position="253"/>
    </location>
    <ligand>
        <name>Mg(2+)</name>
        <dbReference type="ChEBI" id="CHEBI:18420"/>
    </ligand>
</feature>
<feature type="binding site" evidence="1">
    <location>
        <position position="262"/>
    </location>
    <ligand>
        <name>ATP</name>
        <dbReference type="ChEBI" id="CHEBI:30616"/>
    </ligand>
</feature>
<feature type="binding site" evidence="1">
    <location>
        <position position="262"/>
    </location>
    <ligand>
        <name>Mg(2+)</name>
        <dbReference type="ChEBI" id="CHEBI:18420"/>
    </ligand>
</feature>
<reference key="1">
    <citation type="journal article" date="2005" name="Proc. Natl. Acad. Sci. U.S.A.">
        <title>Complete genome sequence of Vibrio fischeri: a symbiotic bacterium with pathogenic congeners.</title>
        <authorList>
            <person name="Ruby E.G."/>
            <person name="Urbanowski M."/>
            <person name="Campbell J."/>
            <person name="Dunn A."/>
            <person name="Faini M."/>
            <person name="Gunsalus R."/>
            <person name="Lostroh P."/>
            <person name="Lupp C."/>
            <person name="McCann J."/>
            <person name="Millikan D."/>
            <person name="Schaefer A."/>
            <person name="Stabb E."/>
            <person name="Stevens A."/>
            <person name="Visick K."/>
            <person name="Whistler C."/>
            <person name="Greenberg E.P."/>
        </authorList>
    </citation>
    <scope>NUCLEOTIDE SEQUENCE [LARGE SCALE GENOMIC DNA]</scope>
    <source>
        <strain>ATCC 700601 / ES114</strain>
    </source>
</reference>